<proteinExistence type="evidence at protein level"/>
<feature type="chain" id="PRO_0000395440" description="Malanin chain A">
    <location>
        <begin position="1"/>
        <end position="10" status="greater than"/>
    </location>
</feature>
<feature type="non-terminal residue" evidence="2">
    <location>
        <position position="10"/>
    </location>
</feature>
<reference evidence="3" key="1">
    <citation type="journal article" date="2009" name="Toxicon">
        <title>Purification, characterization and cytotoxicity of malanin, a novel plant toxin from the seeds of Malania oleifera.</title>
        <authorList>
            <person name="Yuan Y."/>
            <person name="Dai X."/>
            <person name="Wang D."/>
            <person name="Zeng X."/>
        </authorList>
    </citation>
    <scope>PROTEIN SEQUENCE</scope>
    <scope>FUNCTION</scope>
    <scope>SUBUNIT</scope>
    <scope>GLYCOSYLATION</scope>
    <scope>MASS SPECTROMETRY</scope>
    <scope>TOXIC DOSE</scope>
    <source>
        <tissue evidence="1">Seed</tissue>
    </source>
</reference>
<comment type="function">
    <text evidence="1">Significantly inhibits growth and induces an apoptotic response in HeLa cells through cell-cycle arrest at S-phase. Exhibits highly cytotoxic activities against cancer cell and non-cancer cell lines producing IC(50) values of 0.15 nM for human cervical carcinoma cells (HeLa), 7.71 nM for rat pheochromocytoma-12 cells (PC-12), 11.20 nM for human breast cancer cells (MCF-7), 15.80 nM for human leukemia cells (K562), 2.79 nM for African green monkey kidney cells (Vero) and 3.92 nM for normal Madin-Darby canine kidney cells (MDCK).</text>
</comment>
<comment type="subunit">
    <text evidence="1">Heterodimer of an A chain and a B chain; disulfide-linked.</text>
</comment>
<comment type="PTM">
    <text evidence="1">Glycosylated.</text>
</comment>
<comment type="mass spectrometry" mass="61875.0" method="MALDI" evidence="1">
    <text>The measured mass is that of the heterodimer.</text>
</comment>
<comment type="toxic dose">
    <text evidence="1">LD(50) is 26.22 ug/kg by intraperitoneal injection into IRC strain mice.</text>
</comment>
<comment type="toxic dose">
    <text evidence="1">LD(50) is 43.11 mg/kg by intragingival injection into IRC strain mice.</text>
</comment>
<sequence length="10" mass="1172">DYPKLTFTTS</sequence>
<dbReference type="GO" id="GO:0090729">
    <property type="term" value="F:toxin activity"/>
    <property type="evidence" value="ECO:0007669"/>
    <property type="project" value="UniProtKB-KW"/>
</dbReference>
<dbReference type="GO" id="GO:0006952">
    <property type="term" value="P:defense response"/>
    <property type="evidence" value="ECO:0007669"/>
    <property type="project" value="UniProtKB-KW"/>
</dbReference>
<protein>
    <recommendedName>
        <fullName>Malanin chain A</fullName>
    </recommendedName>
</protein>
<accession>P86600</accession>
<keyword id="KW-0053">Apoptosis</keyword>
<keyword id="KW-0903">Direct protein sequencing</keyword>
<keyword id="KW-1015">Disulfide bond</keyword>
<keyword id="KW-0325">Glycoprotein</keyword>
<keyword id="KW-0611">Plant defense</keyword>
<keyword id="KW-0800">Toxin</keyword>
<evidence type="ECO:0000269" key="1">
    <source>
    </source>
</evidence>
<evidence type="ECO:0000303" key="2">
    <source>
    </source>
</evidence>
<evidence type="ECO:0000305" key="3"/>
<name>MALNA_MALOL</name>
<organism>
    <name type="scientific">Malania oleifera</name>
    <name type="common">Garlic-fruit tree</name>
    <dbReference type="NCBI Taxonomy" id="397392"/>
    <lineage>
        <taxon>Eukaryota</taxon>
        <taxon>Viridiplantae</taxon>
        <taxon>Streptophyta</taxon>
        <taxon>Embryophyta</taxon>
        <taxon>Tracheophyta</taxon>
        <taxon>Spermatophyta</taxon>
        <taxon>Magnoliopsida</taxon>
        <taxon>eudicotyledons</taxon>
        <taxon>Gunneridae</taxon>
        <taxon>Pentapetalae</taxon>
        <taxon>Santalales</taxon>
        <taxon>Ximeniaceae</taxon>
        <taxon>Malania</taxon>
    </lineage>
</organism>